<feature type="chain" id="PRO_0000211743" description="Recombination-associated protein RdgC">
    <location>
        <begin position="1"/>
        <end position="299"/>
    </location>
</feature>
<protein>
    <recommendedName>
        <fullName evidence="1">Recombination-associated protein RdgC</fullName>
    </recommendedName>
</protein>
<name>RDGC_NEIMB</name>
<dbReference type="EMBL" id="AE002098">
    <property type="protein sequence ID" value="AAF41262.1"/>
    <property type="molecule type" value="Genomic_DNA"/>
</dbReference>
<dbReference type="PIR" id="F81149">
    <property type="entry name" value="F81149"/>
</dbReference>
<dbReference type="RefSeq" id="NP_273892.1">
    <property type="nucleotide sequence ID" value="NC_003112.2"/>
</dbReference>
<dbReference type="RefSeq" id="WP_002219474.1">
    <property type="nucleotide sequence ID" value="NC_003112.2"/>
</dbReference>
<dbReference type="SMR" id="Q9JZY2"/>
<dbReference type="FunCoup" id="Q9JZY2">
    <property type="interactions" value="91"/>
</dbReference>
<dbReference type="STRING" id="122586.NMB0851"/>
<dbReference type="PaxDb" id="122586-NMB0851"/>
<dbReference type="KEGG" id="nme:NMB0851"/>
<dbReference type="PATRIC" id="fig|122586.8.peg.1065"/>
<dbReference type="HOGENOM" id="CLU_052038_0_0_4"/>
<dbReference type="InParanoid" id="Q9JZY2"/>
<dbReference type="OrthoDB" id="5290530at2"/>
<dbReference type="Proteomes" id="UP000000425">
    <property type="component" value="Chromosome"/>
</dbReference>
<dbReference type="GO" id="GO:0005737">
    <property type="term" value="C:cytoplasm"/>
    <property type="evidence" value="ECO:0007669"/>
    <property type="project" value="UniProtKB-UniRule"/>
</dbReference>
<dbReference type="GO" id="GO:0009295">
    <property type="term" value="C:nucleoid"/>
    <property type="evidence" value="ECO:0007669"/>
    <property type="project" value="UniProtKB-SubCell"/>
</dbReference>
<dbReference type="GO" id="GO:0006310">
    <property type="term" value="P:DNA recombination"/>
    <property type="evidence" value="ECO:0007669"/>
    <property type="project" value="UniProtKB-UniRule"/>
</dbReference>
<dbReference type="HAMAP" id="MF_00194">
    <property type="entry name" value="RdgC"/>
    <property type="match status" value="1"/>
</dbReference>
<dbReference type="InterPro" id="IPR007476">
    <property type="entry name" value="RdgC"/>
</dbReference>
<dbReference type="NCBIfam" id="NF001464">
    <property type="entry name" value="PRK00321.1-5"/>
    <property type="match status" value="1"/>
</dbReference>
<dbReference type="PANTHER" id="PTHR38103">
    <property type="entry name" value="RECOMBINATION-ASSOCIATED PROTEIN RDGC"/>
    <property type="match status" value="1"/>
</dbReference>
<dbReference type="PANTHER" id="PTHR38103:SF1">
    <property type="entry name" value="RECOMBINATION-ASSOCIATED PROTEIN RDGC"/>
    <property type="match status" value="1"/>
</dbReference>
<dbReference type="Pfam" id="PF04381">
    <property type="entry name" value="RdgC"/>
    <property type="match status" value="1"/>
</dbReference>
<accession>Q9JZY2</accession>
<evidence type="ECO:0000255" key="1">
    <source>
        <dbReference type="HAMAP-Rule" id="MF_00194"/>
    </source>
</evidence>
<sequence>MWFKQISFYPLNKEKLPEADVLADKLAEAEFTHCQGLDWFSEGFTAPVSFSPELVFPADFTLRVALKKEEKVLPAGVIRDILEEKVAEIQNNEARNVGRKEKQELKEQITDDLLPRAFTRSSRTEAVFNTRHGYLLVNNAASAKAENILTKLREALGGLEASLPNTKQSPSSLMTGWLLQGHCEGGFELDSDCELKGTGDIVPVVKVSKQDLTADEVVQHVKNGKTVTQLGLVWREQIAFILTQDFTLKRIQYLDVLQEEAESNGDDAAGLAFASQILMAESVSTMLEELVSYLGGWQD</sequence>
<gene>
    <name evidence="1" type="primary">rdgC</name>
    <name type="ordered locus">NMB0851</name>
</gene>
<keyword id="KW-0963">Cytoplasm</keyword>
<keyword id="KW-0233">DNA recombination</keyword>
<keyword id="KW-1185">Reference proteome</keyword>
<comment type="function">
    <text evidence="1">May be involved in recombination.</text>
</comment>
<comment type="subcellular location">
    <subcellularLocation>
        <location evidence="1">Cytoplasm</location>
        <location evidence="1">Nucleoid</location>
    </subcellularLocation>
</comment>
<comment type="similarity">
    <text evidence="1">Belongs to the RdgC family.</text>
</comment>
<reference key="1">
    <citation type="journal article" date="2000" name="Science">
        <title>Complete genome sequence of Neisseria meningitidis serogroup B strain MC58.</title>
        <authorList>
            <person name="Tettelin H."/>
            <person name="Saunders N.J."/>
            <person name="Heidelberg J.F."/>
            <person name="Jeffries A.C."/>
            <person name="Nelson K.E."/>
            <person name="Eisen J.A."/>
            <person name="Ketchum K.A."/>
            <person name="Hood D.W."/>
            <person name="Peden J.F."/>
            <person name="Dodson R.J."/>
            <person name="Nelson W.C."/>
            <person name="Gwinn M.L."/>
            <person name="DeBoy R.T."/>
            <person name="Peterson J.D."/>
            <person name="Hickey E.K."/>
            <person name="Haft D.H."/>
            <person name="Salzberg S.L."/>
            <person name="White O."/>
            <person name="Fleischmann R.D."/>
            <person name="Dougherty B.A."/>
            <person name="Mason T.M."/>
            <person name="Ciecko A."/>
            <person name="Parksey D.S."/>
            <person name="Blair E."/>
            <person name="Cittone H."/>
            <person name="Clark E.B."/>
            <person name="Cotton M.D."/>
            <person name="Utterback T.R."/>
            <person name="Khouri H.M."/>
            <person name="Qin H."/>
            <person name="Vamathevan J.J."/>
            <person name="Gill J."/>
            <person name="Scarlato V."/>
            <person name="Masignani V."/>
            <person name="Pizza M."/>
            <person name="Grandi G."/>
            <person name="Sun L."/>
            <person name="Smith H.O."/>
            <person name="Fraser C.M."/>
            <person name="Moxon E.R."/>
            <person name="Rappuoli R."/>
            <person name="Venter J.C."/>
        </authorList>
    </citation>
    <scope>NUCLEOTIDE SEQUENCE [LARGE SCALE GENOMIC DNA]</scope>
    <source>
        <strain>ATCC BAA-335 / MC58</strain>
    </source>
</reference>
<organism>
    <name type="scientific">Neisseria meningitidis serogroup B (strain ATCC BAA-335 / MC58)</name>
    <dbReference type="NCBI Taxonomy" id="122586"/>
    <lineage>
        <taxon>Bacteria</taxon>
        <taxon>Pseudomonadati</taxon>
        <taxon>Pseudomonadota</taxon>
        <taxon>Betaproteobacteria</taxon>
        <taxon>Neisseriales</taxon>
        <taxon>Neisseriaceae</taxon>
        <taxon>Neisseria</taxon>
    </lineage>
</organism>
<proteinExistence type="inferred from homology"/>